<comment type="function">
    <text evidence="1">Acts as a protein-folding catalyst that interacts with nascent polypeptides to catalyze the formation, isomerization, and reduction or oxidation of disulfide bonds.</text>
</comment>
<comment type="catalytic activity">
    <reaction>
        <text>Catalyzes the rearrangement of -S-S- bonds in proteins.</text>
        <dbReference type="EC" id="5.3.4.1"/>
    </reaction>
</comment>
<comment type="subcellular location">
    <subcellularLocation>
        <location evidence="8">Endoplasmic reticulum lumen</location>
    </subcellularLocation>
</comment>
<comment type="alternative products">
    <event type="alternative splicing"/>
    <isoform>
        <id>Q8VX13-1</id>
        <name>1</name>
        <sequence type="displayed"/>
    </isoform>
    <isoform>
        <id>Q8VX13-2</id>
        <name>2</name>
        <sequence type="described" ref="VSP_039979 VSP_039980"/>
    </isoform>
</comment>
<comment type="tissue specificity">
    <text evidence="6">Widely expressed.</text>
</comment>
<comment type="induction">
    <text evidence="6">By chemically-induced ER stress response.</text>
</comment>
<comment type="similarity">
    <text evidence="8">Belongs to the protein disulfide isomerase family.</text>
</comment>
<comment type="sequence caution" evidence="8">
    <conflict type="erroneous gene model prediction">
        <sequence resource="EMBL-CDS" id="CAB41088"/>
    </conflict>
</comment>
<name>PDI13_ARATH</name>
<gene>
    <name type="primary">PDIL1-3</name>
    <name type="synonym">PDI1</name>
    <name type="synonym">PDI72</name>
    <name type="synonym">PDIL2-1</name>
    <name type="ordered locus">At3g54960</name>
    <name type="ORF">F28P10.60</name>
    <name type="ORF">T15C9.4</name>
</gene>
<proteinExistence type="evidence at transcript level"/>
<evidence type="ECO:0000250" key="1"/>
<evidence type="ECO:0000255" key="2"/>
<evidence type="ECO:0000255" key="3">
    <source>
        <dbReference type="PROSITE-ProRule" id="PRU00691"/>
    </source>
</evidence>
<evidence type="ECO:0000255" key="4">
    <source>
        <dbReference type="PROSITE-ProRule" id="PRU10138"/>
    </source>
</evidence>
<evidence type="ECO:0000256" key="5">
    <source>
        <dbReference type="SAM" id="MobiDB-lite"/>
    </source>
</evidence>
<evidence type="ECO:0000269" key="6">
    <source>
    </source>
</evidence>
<evidence type="ECO:0000303" key="7">
    <source>
    </source>
</evidence>
<evidence type="ECO:0000305" key="8"/>
<dbReference type="EC" id="5.3.4.1"/>
<dbReference type="EMBL" id="AK318844">
    <property type="protein sequence ID" value="BAH56959.1"/>
    <property type="molecule type" value="mRNA"/>
</dbReference>
<dbReference type="EMBL" id="AJ271376">
    <property type="protein sequence ID" value="CAC81067.1"/>
    <property type="molecule type" value="mRNA"/>
</dbReference>
<dbReference type="EMBL" id="AL049655">
    <property type="protein sequence ID" value="CAB41088.1"/>
    <property type="status" value="ALT_SEQ"/>
    <property type="molecule type" value="Genomic_DNA"/>
</dbReference>
<dbReference type="EMBL" id="AL132970">
    <property type="status" value="NOT_ANNOTATED_CDS"/>
    <property type="molecule type" value="Genomic_DNA"/>
</dbReference>
<dbReference type="EMBL" id="CP002686">
    <property type="protein sequence ID" value="AEE79318.1"/>
    <property type="molecule type" value="Genomic_DNA"/>
</dbReference>
<dbReference type="EMBL" id="CP002686">
    <property type="protein sequence ID" value="AEE79319.1"/>
    <property type="molecule type" value="Genomic_DNA"/>
</dbReference>
<dbReference type="EMBL" id="AY093115">
    <property type="protein sequence ID" value="AAM13114.1"/>
    <property type="molecule type" value="mRNA"/>
</dbReference>
<dbReference type="EMBL" id="BT000172">
    <property type="protein sequence ID" value="AAN15491.1"/>
    <property type="molecule type" value="mRNA"/>
</dbReference>
<dbReference type="PIR" id="T06724">
    <property type="entry name" value="T06724"/>
</dbReference>
<dbReference type="RefSeq" id="NP_001118842.1">
    <molecule id="Q8VX13-2"/>
    <property type="nucleotide sequence ID" value="NM_001125370.1"/>
</dbReference>
<dbReference type="RefSeq" id="NP_191056.2">
    <molecule id="Q8VX13-1"/>
    <property type="nucleotide sequence ID" value="NM_115353.5"/>
</dbReference>
<dbReference type="SMR" id="Q8VX13"/>
<dbReference type="BioGRID" id="9977">
    <property type="interactions" value="15"/>
</dbReference>
<dbReference type="FunCoup" id="Q8VX13">
    <property type="interactions" value="1892"/>
</dbReference>
<dbReference type="IntAct" id="Q8VX13">
    <property type="interactions" value="1"/>
</dbReference>
<dbReference type="STRING" id="3702.Q8VX13"/>
<dbReference type="GlyCosmos" id="Q8VX13">
    <property type="glycosylation" value="8 sites, No reported glycans"/>
</dbReference>
<dbReference type="GlyGen" id="Q8VX13">
    <property type="glycosylation" value="8 sites"/>
</dbReference>
<dbReference type="PaxDb" id="3702-AT3G54960.1"/>
<dbReference type="ProteomicsDB" id="236386">
    <molecule id="Q8VX13-1"/>
</dbReference>
<dbReference type="EnsemblPlants" id="AT3G54960.1">
    <molecule id="Q8VX13-1"/>
    <property type="protein sequence ID" value="AT3G54960.1"/>
    <property type="gene ID" value="AT3G54960"/>
</dbReference>
<dbReference type="EnsemblPlants" id="AT3G54960.2">
    <molecule id="Q8VX13-2"/>
    <property type="protein sequence ID" value="AT3G54960.2"/>
    <property type="gene ID" value="AT3G54960"/>
</dbReference>
<dbReference type="GeneID" id="824661"/>
<dbReference type="Gramene" id="AT3G54960.1">
    <molecule id="Q8VX13-1"/>
    <property type="protein sequence ID" value="AT3G54960.1"/>
    <property type="gene ID" value="AT3G54960"/>
</dbReference>
<dbReference type="Gramene" id="AT3G54960.2">
    <molecule id="Q8VX13-2"/>
    <property type="protein sequence ID" value="AT3G54960.2"/>
    <property type="gene ID" value="AT3G54960"/>
</dbReference>
<dbReference type="KEGG" id="ath:AT3G54960"/>
<dbReference type="Araport" id="AT3G54960"/>
<dbReference type="TAIR" id="AT3G54960">
    <property type="gene designation" value="PDIL1-3"/>
</dbReference>
<dbReference type="eggNOG" id="KOG0190">
    <property type="taxonomic scope" value="Eukaryota"/>
</dbReference>
<dbReference type="InParanoid" id="Q8VX13"/>
<dbReference type="OMA" id="HANSHHD"/>
<dbReference type="OrthoDB" id="427280at2759"/>
<dbReference type="PhylomeDB" id="Q8VX13"/>
<dbReference type="CD-CODE" id="4299E36E">
    <property type="entry name" value="Nucleolus"/>
</dbReference>
<dbReference type="PRO" id="PR:Q8VX13"/>
<dbReference type="Proteomes" id="UP000006548">
    <property type="component" value="Chromosome 3"/>
</dbReference>
<dbReference type="ExpressionAtlas" id="Q8VX13">
    <property type="expression patterns" value="baseline and differential"/>
</dbReference>
<dbReference type="GO" id="GO:0005829">
    <property type="term" value="C:cytosol"/>
    <property type="evidence" value="ECO:0000314"/>
    <property type="project" value="TAIR"/>
</dbReference>
<dbReference type="GO" id="GO:0005783">
    <property type="term" value="C:endoplasmic reticulum"/>
    <property type="evidence" value="ECO:0007005"/>
    <property type="project" value="TAIR"/>
</dbReference>
<dbReference type="GO" id="GO:0005788">
    <property type="term" value="C:endoplasmic reticulum lumen"/>
    <property type="evidence" value="ECO:0007669"/>
    <property type="project" value="UniProtKB-SubCell"/>
</dbReference>
<dbReference type="GO" id="GO:0000325">
    <property type="term" value="C:plant-type vacuole"/>
    <property type="evidence" value="ECO:0007005"/>
    <property type="project" value="TAIR"/>
</dbReference>
<dbReference type="GO" id="GO:0099503">
    <property type="term" value="C:secretory vesicle"/>
    <property type="evidence" value="ECO:0007005"/>
    <property type="project" value="TAIR"/>
</dbReference>
<dbReference type="GO" id="GO:0003756">
    <property type="term" value="F:protein disulfide isomerase activity"/>
    <property type="evidence" value="ECO:0000250"/>
    <property type="project" value="TAIR"/>
</dbReference>
<dbReference type="GO" id="GO:0034976">
    <property type="term" value="P:response to endoplasmic reticulum stress"/>
    <property type="evidence" value="ECO:0000270"/>
    <property type="project" value="TAIR"/>
</dbReference>
<dbReference type="CDD" id="cd02961">
    <property type="entry name" value="PDI_a_family"/>
    <property type="match status" value="1"/>
</dbReference>
<dbReference type="CDD" id="cd02995">
    <property type="entry name" value="PDI_a_PDI_a'_C"/>
    <property type="match status" value="1"/>
</dbReference>
<dbReference type="CDD" id="cd02982">
    <property type="entry name" value="PDI_b'_family"/>
    <property type="match status" value="1"/>
</dbReference>
<dbReference type="CDD" id="cd02981">
    <property type="entry name" value="PDI_b_family"/>
    <property type="match status" value="1"/>
</dbReference>
<dbReference type="FunFam" id="3.40.30.10:FF:000424">
    <property type="entry name" value="Predicted protein"/>
    <property type="match status" value="1"/>
</dbReference>
<dbReference type="FunFam" id="3.40.30.10:FF:000508">
    <property type="entry name" value="Predicted protein"/>
    <property type="match status" value="1"/>
</dbReference>
<dbReference type="FunFam" id="3.40.30.10:FF:000109">
    <property type="entry name" value="Protein disulfide-isomerase"/>
    <property type="match status" value="1"/>
</dbReference>
<dbReference type="FunFam" id="3.40.30.10:FF:000134">
    <property type="entry name" value="Protein disulfide-isomerase"/>
    <property type="match status" value="1"/>
</dbReference>
<dbReference type="Gene3D" id="3.40.30.10">
    <property type="entry name" value="Glutaredoxin"/>
    <property type="match status" value="4"/>
</dbReference>
<dbReference type="InterPro" id="IPR005792">
    <property type="entry name" value="Prot_disulphide_isomerase"/>
</dbReference>
<dbReference type="InterPro" id="IPR036249">
    <property type="entry name" value="Thioredoxin-like_sf"/>
</dbReference>
<dbReference type="InterPro" id="IPR017937">
    <property type="entry name" value="Thioredoxin_CS"/>
</dbReference>
<dbReference type="InterPro" id="IPR013766">
    <property type="entry name" value="Thioredoxin_domain"/>
</dbReference>
<dbReference type="NCBIfam" id="TIGR01130">
    <property type="entry name" value="ER_PDI_fam"/>
    <property type="match status" value="1"/>
</dbReference>
<dbReference type="PANTHER" id="PTHR18929">
    <property type="entry name" value="PROTEIN DISULFIDE ISOMERASE"/>
    <property type="match status" value="1"/>
</dbReference>
<dbReference type="PANTHER" id="PTHR18929:SF217">
    <property type="entry name" value="PROTEIN DISULFIDE ISOMERASE-LIKE 1-3"/>
    <property type="match status" value="1"/>
</dbReference>
<dbReference type="Pfam" id="PF00085">
    <property type="entry name" value="Thioredoxin"/>
    <property type="match status" value="2"/>
</dbReference>
<dbReference type="Pfam" id="PF13848">
    <property type="entry name" value="Thioredoxin_6"/>
    <property type="match status" value="1"/>
</dbReference>
<dbReference type="SUPFAM" id="SSF52833">
    <property type="entry name" value="Thioredoxin-like"/>
    <property type="match status" value="4"/>
</dbReference>
<dbReference type="PROSITE" id="PS00014">
    <property type="entry name" value="ER_TARGET"/>
    <property type="match status" value="1"/>
</dbReference>
<dbReference type="PROSITE" id="PS00194">
    <property type="entry name" value="THIOREDOXIN_1"/>
    <property type="match status" value="2"/>
</dbReference>
<dbReference type="PROSITE" id="PS51352">
    <property type="entry name" value="THIOREDOXIN_2"/>
    <property type="match status" value="2"/>
</dbReference>
<accession>Q8VX13</accession>
<accession>B3H5N9</accession>
<accession>Q9SV44</accession>
<feature type="signal peptide" evidence="2">
    <location>
        <begin position="1"/>
        <end position="25"/>
    </location>
</feature>
<feature type="chain" id="PRO_5000065917" description="Protein disulfide isomerase-like 1-3">
    <location>
        <begin position="26"/>
        <end position="579"/>
    </location>
</feature>
<feature type="domain" description="Thioredoxin 1" evidence="3">
    <location>
        <begin position="81"/>
        <end position="204"/>
    </location>
</feature>
<feature type="domain" description="Thioredoxin 2" evidence="3">
    <location>
        <begin position="416"/>
        <end position="546"/>
    </location>
</feature>
<feature type="region of interest" description="Disordered" evidence="5">
    <location>
        <begin position="44"/>
        <end position="91"/>
    </location>
</feature>
<feature type="region of interest" description="Disordered" evidence="5">
    <location>
        <begin position="558"/>
        <end position="579"/>
    </location>
</feature>
<feature type="short sequence motif" description="Prevents secretion from ER" evidence="4">
    <location>
        <begin position="576"/>
        <end position="579"/>
    </location>
</feature>
<feature type="compositionally biased region" description="Basic and acidic residues" evidence="5">
    <location>
        <begin position="44"/>
        <end position="69"/>
    </location>
</feature>
<feature type="compositionally biased region" description="Basic and acidic residues" evidence="5">
    <location>
        <begin position="80"/>
        <end position="89"/>
    </location>
</feature>
<feature type="compositionally biased region" description="Basic and acidic residues" evidence="5">
    <location>
        <begin position="565"/>
        <end position="579"/>
    </location>
</feature>
<feature type="active site" description="Nucleophile" evidence="1">
    <location>
        <position position="128"/>
    </location>
</feature>
<feature type="active site" description="Nucleophile" evidence="1">
    <location>
        <position position="131"/>
    </location>
</feature>
<feature type="active site" description="Nucleophile" evidence="1">
    <location>
        <position position="467"/>
    </location>
</feature>
<feature type="active site" description="Nucleophile" evidence="1">
    <location>
        <position position="470"/>
    </location>
</feature>
<feature type="site" description="Lowers pKa of C-terminal Cys of first active site" evidence="1">
    <location>
        <position position="190"/>
    </location>
</feature>
<feature type="site" description="Contributes to redox potential value" evidence="1">
    <location>
        <position position="468"/>
    </location>
</feature>
<feature type="site" description="Contributes to redox potential value" evidence="1">
    <location>
        <position position="469"/>
    </location>
</feature>
<feature type="site" description="Lowers pKa of C-terminal Cys of second active site" evidence="1">
    <location>
        <position position="532"/>
    </location>
</feature>
<feature type="glycosylation site" description="N-linked (GlcNAc...) asparagine" evidence="2">
    <location>
        <position position="27"/>
    </location>
</feature>
<feature type="glycosylation site" description="N-linked (GlcNAc...) asparagine" evidence="2">
    <location>
        <position position="108"/>
    </location>
</feature>
<feature type="glycosylation site" description="N-linked (GlcNAc...) asparagine" evidence="2">
    <location>
        <position position="115"/>
    </location>
</feature>
<feature type="glycosylation site" description="N-linked (GlcNAc...) asparagine" evidence="2">
    <location>
        <position position="209"/>
    </location>
</feature>
<feature type="glycosylation site" description="N-linked (GlcNAc...) asparagine" evidence="2">
    <location>
        <position position="293"/>
    </location>
</feature>
<feature type="glycosylation site" description="N-linked (GlcNAc...) asparagine" evidence="2">
    <location>
        <position position="313"/>
    </location>
</feature>
<feature type="glycosylation site" description="N-linked (GlcNAc...) asparagine" evidence="2">
    <location>
        <position position="338"/>
    </location>
</feature>
<feature type="glycosylation site" description="N-linked (GlcNAc...) asparagine" evidence="2">
    <location>
        <position position="520"/>
    </location>
</feature>
<feature type="disulfide bond" description="Redox-active" evidence="3">
    <location>
        <begin position="128"/>
        <end position="131"/>
    </location>
</feature>
<feature type="disulfide bond" description="Redox-active" evidence="3">
    <location>
        <begin position="467"/>
        <end position="470"/>
    </location>
</feature>
<feature type="splice variant" id="VSP_039979" description="In isoform 2." evidence="7">
    <original>ADGFPTILFFPG</original>
    <variation>VIKKKELRKSFW</variation>
    <location>
        <begin position="507"/>
        <end position="518"/>
    </location>
</feature>
<feature type="splice variant" id="VSP_039980" description="In isoform 2." evidence="7">
    <location>
        <begin position="519"/>
        <end position="579"/>
    </location>
</feature>
<sequence>MASSSTSISLLLFVSFILLLVNSRAENASSGSDLDEELAFLAAEESKEQSHGGGSYHEEEHDHQHRDFENYDDLEQGGGEFHHGDHGYEEEPLPPVDEKDVAVLTKDNFTEFVGNNSFAMVEFYAPWCGACQALTPEYAAAATELKGLAALAKIDATEEGDLAQKYEIQGFPTVFLFVDGEMRKTYEGERTKDGIVTWLKKKASPSIHNITTKEEAERVLSAEPKLVFGFLNSLVGSESEELAAASRLEDDLSFYQTASPDIAKLFEIETQVKRPALVLLKKEEEKLARFDGNFTKTAIAEFVSANKVPLVINFTREGASLIFESSVKNQLILFAKANESEKHLPTLREVAKSFKGKFVFVYVQMDNEDYGEAVSGFFGVTGAAPKVLVYTGNEDMRKFILDGELTVNNIKTLAEDFLADKLKPFYKSDPLPENNDGDVKVIVGNNFDEIVLDESKDVLLEIYAPWCGHCQSFEPIYNKLGKYLKGIDSLVVAKMDGTSNEHPRAKADGFPTILFFPGGNKSFDPIAVDVDRTVVELYKFLKKHASIPFKLEKPATPEPVISTMKSDEKIEGDSSKDEL</sequence>
<organism>
    <name type="scientific">Arabidopsis thaliana</name>
    <name type="common">Mouse-ear cress</name>
    <dbReference type="NCBI Taxonomy" id="3702"/>
    <lineage>
        <taxon>Eukaryota</taxon>
        <taxon>Viridiplantae</taxon>
        <taxon>Streptophyta</taxon>
        <taxon>Embryophyta</taxon>
        <taxon>Tracheophyta</taxon>
        <taxon>Spermatophyta</taxon>
        <taxon>Magnoliopsida</taxon>
        <taxon>eudicotyledons</taxon>
        <taxon>Gunneridae</taxon>
        <taxon>Pentapetalae</taxon>
        <taxon>rosids</taxon>
        <taxon>malvids</taxon>
        <taxon>Brassicales</taxon>
        <taxon>Brassicaceae</taxon>
        <taxon>Camelineae</taxon>
        <taxon>Arabidopsis</taxon>
    </lineage>
</organism>
<keyword id="KW-0025">Alternative splicing</keyword>
<keyword id="KW-1015">Disulfide bond</keyword>
<keyword id="KW-0256">Endoplasmic reticulum</keyword>
<keyword id="KW-0325">Glycoprotein</keyword>
<keyword id="KW-0413">Isomerase</keyword>
<keyword id="KW-0676">Redox-active center</keyword>
<keyword id="KW-1185">Reference proteome</keyword>
<keyword id="KW-0677">Repeat</keyword>
<keyword id="KW-0732">Signal</keyword>
<reference key="1">
    <citation type="thesis" date="2000" institute="Cambridge University" country="United Kingdom">
        <title>Arabidopsis thaliana mRNA for ERp72.</title>
        <authorList>
            <person name="Mahon P."/>
        </authorList>
    </citation>
    <scope>NUCLEOTIDE SEQUENCE [MRNA] (ISOFORM 1)</scope>
</reference>
<reference key="2">
    <citation type="journal article" date="2000" name="Nature">
        <title>Sequence and analysis of chromosome 3 of the plant Arabidopsis thaliana.</title>
        <authorList>
            <person name="Salanoubat M."/>
            <person name="Lemcke K."/>
            <person name="Rieger M."/>
            <person name="Ansorge W."/>
            <person name="Unseld M."/>
            <person name="Fartmann B."/>
            <person name="Valle G."/>
            <person name="Bloecker H."/>
            <person name="Perez-Alonso M."/>
            <person name="Obermaier B."/>
            <person name="Delseny M."/>
            <person name="Boutry M."/>
            <person name="Grivell L.A."/>
            <person name="Mache R."/>
            <person name="Puigdomenech P."/>
            <person name="De Simone V."/>
            <person name="Choisne N."/>
            <person name="Artiguenave F."/>
            <person name="Robert C."/>
            <person name="Brottier P."/>
            <person name="Wincker P."/>
            <person name="Cattolico L."/>
            <person name="Weissenbach J."/>
            <person name="Saurin W."/>
            <person name="Quetier F."/>
            <person name="Schaefer M."/>
            <person name="Mueller-Auer S."/>
            <person name="Gabel C."/>
            <person name="Fuchs M."/>
            <person name="Benes V."/>
            <person name="Wurmbach E."/>
            <person name="Drzonek H."/>
            <person name="Erfle H."/>
            <person name="Jordan N."/>
            <person name="Bangert S."/>
            <person name="Wiedelmann R."/>
            <person name="Kranz H."/>
            <person name="Voss H."/>
            <person name="Holland R."/>
            <person name="Brandt P."/>
            <person name="Nyakatura G."/>
            <person name="Vezzi A."/>
            <person name="D'Angelo M."/>
            <person name="Pallavicini A."/>
            <person name="Toppo S."/>
            <person name="Simionati B."/>
            <person name="Conrad A."/>
            <person name="Hornischer K."/>
            <person name="Kauer G."/>
            <person name="Loehnert T.-H."/>
            <person name="Nordsiek G."/>
            <person name="Reichelt J."/>
            <person name="Scharfe M."/>
            <person name="Schoen O."/>
            <person name="Bargues M."/>
            <person name="Terol J."/>
            <person name="Climent J."/>
            <person name="Navarro P."/>
            <person name="Collado C."/>
            <person name="Perez-Perez A."/>
            <person name="Ottenwaelder B."/>
            <person name="Duchemin D."/>
            <person name="Cooke R."/>
            <person name="Laudie M."/>
            <person name="Berger-Llauro C."/>
            <person name="Purnelle B."/>
            <person name="Masuy D."/>
            <person name="de Haan M."/>
            <person name="Maarse A.C."/>
            <person name="Alcaraz J.-P."/>
            <person name="Cottet A."/>
            <person name="Casacuberta E."/>
            <person name="Monfort A."/>
            <person name="Argiriou A."/>
            <person name="Flores M."/>
            <person name="Liguori R."/>
            <person name="Vitale D."/>
            <person name="Mannhaupt G."/>
            <person name="Haase D."/>
            <person name="Schoof H."/>
            <person name="Rudd S."/>
            <person name="Zaccaria P."/>
            <person name="Mewes H.-W."/>
            <person name="Mayer K.F.X."/>
            <person name="Kaul S."/>
            <person name="Town C.D."/>
            <person name="Koo H.L."/>
            <person name="Tallon L.J."/>
            <person name="Jenkins J."/>
            <person name="Rooney T."/>
            <person name="Rizzo M."/>
            <person name="Walts A."/>
            <person name="Utterback T."/>
            <person name="Fujii C.Y."/>
            <person name="Shea T.P."/>
            <person name="Creasy T.H."/>
            <person name="Haas B."/>
            <person name="Maiti R."/>
            <person name="Wu D."/>
            <person name="Peterson J."/>
            <person name="Van Aken S."/>
            <person name="Pai G."/>
            <person name="Militscher J."/>
            <person name="Sellers P."/>
            <person name="Gill J.E."/>
            <person name="Feldblyum T.V."/>
            <person name="Preuss D."/>
            <person name="Lin X."/>
            <person name="Nierman W.C."/>
            <person name="Salzberg S.L."/>
            <person name="White O."/>
            <person name="Venter J.C."/>
            <person name="Fraser C.M."/>
            <person name="Kaneko T."/>
            <person name="Nakamura Y."/>
            <person name="Sato S."/>
            <person name="Kato T."/>
            <person name="Asamizu E."/>
            <person name="Sasamoto S."/>
            <person name="Kimura T."/>
            <person name="Idesawa K."/>
            <person name="Kawashima K."/>
            <person name="Kishida Y."/>
            <person name="Kiyokawa C."/>
            <person name="Kohara M."/>
            <person name="Matsumoto M."/>
            <person name="Matsuno A."/>
            <person name="Muraki A."/>
            <person name="Nakayama S."/>
            <person name="Nakazaki N."/>
            <person name="Shinpo S."/>
            <person name="Takeuchi C."/>
            <person name="Wada T."/>
            <person name="Watanabe A."/>
            <person name="Yamada M."/>
            <person name="Yasuda M."/>
            <person name="Tabata S."/>
        </authorList>
    </citation>
    <scope>NUCLEOTIDE SEQUENCE [LARGE SCALE GENOMIC DNA]</scope>
    <source>
        <strain>cv. Columbia</strain>
    </source>
</reference>
<reference key="3">
    <citation type="journal article" date="2017" name="Plant J.">
        <title>Araport11: a complete reannotation of the Arabidopsis thaliana reference genome.</title>
        <authorList>
            <person name="Cheng C.Y."/>
            <person name="Krishnakumar V."/>
            <person name="Chan A.P."/>
            <person name="Thibaud-Nissen F."/>
            <person name="Schobel S."/>
            <person name="Town C.D."/>
        </authorList>
    </citation>
    <scope>GENOME REANNOTATION</scope>
    <source>
        <strain>cv. Columbia</strain>
    </source>
</reference>
<reference key="4">
    <citation type="journal article" date="2003" name="Science">
        <title>Empirical analysis of transcriptional activity in the Arabidopsis genome.</title>
        <authorList>
            <person name="Yamada K."/>
            <person name="Lim J."/>
            <person name="Dale J.M."/>
            <person name="Chen H."/>
            <person name="Shinn P."/>
            <person name="Palm C.J."/>
            <person name="Southwick A.M."/>
            <person name="Wu H.C."/>
            <person name="Kim C.J."/>
            <person name="Nguyen M."/>
            <person name="Pham P.K."/>
            <person name="Cheuk R.F."/>
            <person name="Karlin-Newmann G."/>
            <person name="Liu S.X."/>
            <person name="Lam B."/>
            <person name="Sakano H."/>
            <person name="Wu T."/>
            <person name="Yu G."/>
            <person name="Miranda M."/>
            <person name="Quach H.L."/>
            <person name="Tripp M."/>
            <person name="Chang C.H."/>
            <person name="Lee J.M."/>
            <person name="Toriumi M.J."/>
            <person name="Chan M.M."/>
            <person name="Tang C.C."/>
            <person name="Onodera C.S."/>
            <person name="Deng J.M."/>
            <person name="Akiyama K."/>
            <person name="Ansari Y."/>
            <person name="Arakawa T."/>
            <person name="Banh J."/>
            <person name="Banno F."/>
            <person name="Bowser L."/>
            <person name="Brooks S.Y."/>
            <person name="Carninci P."/>
            <person name="Chao Q."/>
            <person name="Choy N."/>
            <person name="Enju A."/>
            <person name="Goldsmith A.D."/>
            <person name="Gurjal M."/>
            <person name="Hansen N.F."/>
            <person name="Hayashizaki Y."/>
            <person name="Johnson-Hopson C."/>
            <person name="Hsuan V.W."/>
            <person name="Iida K."/>
            <person name="Karnes M."/>
            <person name="Khan S."/>
            <person name="Koesema E."/>
            <person name="Ishida J."/>
            <person name="Jiang P.X."/>
            <person name="Jones T."/>
            <person name="Kawai J."/>
            <person name="Kamiya A."/>
            <person name="Meyers C."/>
            <person name="Nakajima M."/>
            <person name="Narusaka M."/>
            <person name="Seki M."/>
            <person name="Sakurai T."/>
            <person name="Satou M."/>
            <person name="Tamse R."/>
            <person name="Vaysberg M."/>
            <person name="Wallender E.K."/>
            <person name="Wong C."/>
            <person name="Yamamura Y."/>
            <person name="Yuan S."/>
            <person name="Shinozaki K."/>
            <person name="Davis R.W."/>
            <person name="Theologis A."/>
            <person name="Ecker J.R."/>
        </authorList>
    </citation>
    <scope>NUCLEOTIDE SEQUENCE [LARGE SCALE MRNA] (ISOFORM 1)</scope>
    <source>
        <strain>cv. Columbia</strain>
    </source>
</reference>
<reference key="5">
    <citation type="journal article" date="2009" name="DNA Res.">
        <title>Analysis of multiple occurrences of alternative splicing events in Arabidopsis thaliana using novel sequenced full-length cDNAs.</title>
        <authorList>
            <person name="Iida K."/>
            <person name="Fukami-Kobayashi K."/>
            <person name="Toyoda A."/>
            <person name="Sakaki Y."/>
            <person name="Kobayashi M."/>
            <person name="Seki M."/>
            <person name="Shinozaki K."/>
        </authorList>
    </citation>
    <scope>NUCLEOTIDE SEQUENCE [LARGE SCALE MRNA] (ISOFORM 2)</scope>
    <source>
        <strain>cv. Columbia</strain>
    </source>
</reference>
<reference key="6">
    <citation type="journal article" date="2005" name="Plant Physiol.">
        <title>Phylogenetic analyses identify 10 classes of the protein disulfide isomerase family in plants, including single-domain protein disulfide isomerase-related proteins.</title>
        <authorList>
            <person name="Houston N.L."/>
            <person name="Fan C."/>
            <person name="Xiang J.Q."/>
            <person name="Schulze J.M."/>
            <person name="Jung R."/>
            <person name="Boston R.S."/>
        </authorList>
    </citation>
    <scope>GENE FAMILY</scope>
    <scope>NOMENCLATURE</scope>
</reference>
<reference key="7">
    <citation type="journal article" date="2008" name="Mol. Genet. Genomics">
        <title>Endoplasmic reticulum stress activates the expression of a sub-group of protein disulfide isomerase genes and AtbZIP60 modulates the response in Arabidopsis thaliana.</title>
        <authorList>
            <person name="Lu D.-P."/>
            <person name="Christopher D.A."/>
        </authorList>
    </citation>
    <scope>TISSUE SPECIFICITY</scope>
    <scope>INDUCTION</scope>
</reference>
<reference key="8">
    <citation type="journal article" date="2010" name="BMC Plant Biol.">
        <title>The protein disulfide isomerase gene family in bread wheat (T. aestivum L.).</title>
        <authorList>
            <person name="d'Aloisio E."/>
            <person name="Paolacci A.R."/>
            <person name="Dhanapal A.P."/>
            <person name="Tanzarella O.A."/>
            <person name="Porceddu E."/>
            <person name="Ciaffi M."/>
        </authorList>
    </citation>
    <scope>GENE FAMILY</scope>
    <scope>NOMENCLATURE</scope>
</reference>
<protein>
    <recommendedName>
        <fullName>Protein disulfide isomerase-like 1-3</fullName>
        <shortName>AtPDIL1-3</shortName>
        <ecNumber>5.3.4.1</ecNumber>
    </recommendedName>
    <alternativeName>
        <fullName>Protein disulfide isomerase 1</fullName>
        <shortName>AtPDI1</shortName>
    </alternativeName>
    <alternativeName>
        <fullName>Protein disulfide isomerase-like 2-1</fullName>
        <shortName>AtPDIL2-1</shortName>
    </alternativeName>
</protein>